<protein>
    <recommendedName>
        <fullName>Heat shock 70 kDa protein cognate 1</fullName>
    </recommendedName>
    <alternativeName>
        <fullName>Heat shock 70 kDa protein 70C</fullName>
    </alternativeName>
</protein>
<organism>
    <name type="scientific">Drosophila simulans</name>
    <name type="common">Fruit fly</name>
    <dbReference type="NCBI Taxonomy" id="7240"/>
    <lineage>
        <taxon>Eukaryota</taxon>
        <taxon>Metazoa</taxon>
        <taxon>Ecdysozoa</taxon>
        <taxon>Arthropoda</taxon>
        <taxon>Hexapoda</taxon>
        <taxon>Insecta</taxon>
        <taxon>Pterygota</taxon>
        <taxon>Neoptera</taxon>
        <taxon>Endopterygota</taxon>
        <taxon>Diptera</taxon>
        <taxon>Brachycera</taxon>
        <taxon>Muscomorpha</taxon>
        <taxon>Ephydroidea</taxon>
        <taxon>Drosophilidae</taxon>
        <taxon>Drosophila</taxon>
        <taxon>Sophophora</taxon>
    </lineage>
</organism>
<name>HSP7A_DROSI</name>
<feature type="chain" id="PRO_0000078338" description="Heat shock 70 kDa protein cognate 1">
    <location>
        <begin position="1"/>
        <end position="214" status="greater than"/>
    </location>
</feature>
<feature type="non-consecutive residues" evidence="1">
    <location>
        <begin position="104"/>
        <end position="105"/>
    </location>
</feature>
<feature type="non-terminal residue">
    <location>
        <position position="214"/>
    </location>
</feature>
<reference key="1">
    <citation type="journal article" date="1982" name="Proc. Natl. Acad. Sci. U.S.A.">
        <title>Drosophila gene related to the major heat shock-induced gene is transcribed at normal temperatures and not induced by heat shock.</title>
        <authorList>
            <person name="Ingolia T.D."/>
            <person name="Craig E.A."/>
        </authorList>
    </citation>
    <scope>NUCLEOTIDE SEQUENCE [GENOMIC DNA]</scope>
</reference>
<accession>P02826</accession>
<dbReference type="EMBL" id="J01088">
    <property type="protein sequence ID" value="AAA28632.1"/>
    <property type="molecule type" value="Genomic_DNA"/>
</dbReference>
<dbReference type="EMBL" id="J01087">
    <property type="protein sequence ID" value="AAA28632.1"/>
    <property type="status" value="JOINED"/>
    <property type="molecule type" value="Genomic_DNA"/>
</dbReference>
<dbReference type="EMBL" id="J01089">
    <property type="protein sequence ID" value="AAA28633.1"/>
    <property type="molecule type" value="Genomic_DNA"/>
</dbReference>
<dbReference type="PIR" id="A03309">
    <property type="entry name" value="A03309"/>
</dbReference>
<dbReference type="SMR" id="P02826"/>
<dbReference type="OrthoDB" id="2401965at2759"/>
<dbReference type="GO" id="GO:0005524">
    <property type="term" value="F:ATP binding"/>
    <property type="evidence" value="ECO:0007669"/>
    <property type="project" value="UniProtKB-KW"/>
</dbReference>
<dbReference type="GO" id="GO:0140662">
    <property type="term" value="F:ATP-dependent protein folding chaperone"/>
    <property type="evidence" value="ECO:0007669"/>
    <property type="project" value="InterPro"/>
</dbReference>
<dbReference type="FunFam" id="3.90.640.10:FF:000058">
    <property type="entry name" value="Heat shock 70 kDa protein"/>
    <property type="match status" value="1"/>
</dbReference>
<dbReference type="FunFam" id="3.30.420.40:FF:000535">
    <property type="entry name" value="Heat shock 70 kDa protein 1A"/>
    <property type="match status" value="1"/>
</dbReference>
<dbReference type="FunFam" id="3.30.30.30:FF:000001">
    <property type="entry name" value="heat shock 70 kDa protein-like"/>
    <property type="match status" value="1"/>
</dbReference>
<dbReference type="Gene3D" id="3.30.30.30">
    <property type="match status" value="1"/>
</dbReference>
<dbReference type="Gene3D" id="3.30.420.40">
    <property type="match status" value="2"/>
</dbReference>
<dbReference type="Gene3D" id="3.90.640.10">
    <property type="entry name" value="Actin, Chain A, domain 4"/>
    <property type="match status" value="1"/>
</dbReference>
<dbReference type="InterPro" id="IPR043129">
    <property type="entry name" value="ATPase_NBD"/>
</dbReference>
<dbReference type="InterPro" id="IPR018181">
    <property type="entry name" value="Heat_shock_70_CS"/>
</dbReference>
<dbReference type="InterPro" id="IPR013126">
    <property type="entry name" value="Hsp_70_fam"/>
</dbReference>
<dbReference type="PANTHER" id="PTHR19375">
    <property type="entry name" value="HEAT SHOCK PROTEIN 70KDA"/>
    <property type="match status" value="1"/>
</dbReference>
<dbReference type="Pfam" id="PF00012">
    <property type="entry name" value="HSP70"/>
    <property type="match status" value="2"/>
</dbReference>
<dbReference type="PRINTS" id="PR00301">
    <property type="entry name" value="HEATSHOCK70"/>
</dbReference>
<dbReference type="SUPFAM" id="SSF53067">
    <property type="entry name" value="Actin-like ATPase domain"/>
    <property type="match status" value="2"/>
</dbReference>
<dbReference type="PROSITE" id="PS00297">
    <property type="entry name" value="HSP70_1"/>
    <property type="match status" value="1"/>
</dbReference>
<evidence type="ECO:0000305" key="1"/>
<comment type="developmental stage">
    <text>Heat shock cognate proteins are expressed constitutively during normal development.</text>
</comment>
<comment type="similarity">
    <text evidence="1">Belongs to the heat shock protein 70 family.</text>
</comment>
<gene>
    <name type="primary">Hsc70-1</name>
    <name type="synonym">Hsc1</name>
</gene>
<proteinExistence type="evidence at transcript level"/>
<sequence length="214" mass="24001">MPKLPAVGIDLGTTYSCVGVFQHGKVEIIANDQGNRTTPSYVAFTESERLIGDAAKNQVAMNPNNTIFDAKRLIGRRFDDATVQSDMKHWPFEAFAENGKPRIRGTFDVSVLTIEDGFEVKATAGDTHLGREDFDNRLVNHLVQEFQRKHGKDLGQNKRALRRLRTACERAKRTLSSSTQASIEIDSLFEGVDFYTSVTRARFEELNGDLFRGT</sequence>
<keyword id="KW-0067">ATP-binding</keyword>
<keyword id="KW-0547">Nucleotide-binding</keyword>
<keyword id="KW-0346">Stress response</keyword>